<organism>
    <name type="scientific">Xenopus tropicalis</name>
    <name type="common">Western clawed frog</name>
    <name type="synonym">Silurana tropicalis</name>
    <dbReference type="NCBI Taxonomy" id="8364"/>
    <lineage>
        <taxon>Eukaryota</taxon>
        <taxon>Metazoa</taxon>
        <taxon>Chordata</taxon>
        <taxon>Craniata</taxon>
        <taxon>Vertebrata</taxon>
        <taxon>Euteleostomi</taxon>
        <taxon>Amphibia</taxon>
        <taxon>Batrachia</taxon>
        <taxon>Anura</taxon>
        <taxon>Pipoidea</taxon>
        <taxon>Pipidae</taxon>
        <taxon>Xenopodinae</taxon>
        <taxon>Xenopus</taxon>
        <taxon>Silurana</taxon>
    </lineage>
</organism>
<reference evidence="9" key="1">
    <citation type="submission" date="2005-07" db="EMBL/GenBank/DDBJ databases">
        <title>Sequence of Xenopus tropicalis development genes.</title>
        <authorList>
            <person name="Qin S."/>
            <person name="Dors M."/>
            <person name="Johnson E."/>
            <person name="Bloom S."/>
            <person name="Hood L."/>
            <person name="Rowen L."/>
        </authorList>
    </citation>
    <scope>NUCLEOTIDE SEQUENCE [GENOMIC DNA]</scope>
</reference>
<reference evidence="9" key="2">
    <citation type="submission" date="2006-10" db="EMBL/GenBank/DDBJ databases">
        <authorList>
            <consortium name="Sanger Xenopus tropicalis EST/cDNA project"/>
        </authorList>
    </citation>
    <scope>NUCLEOTIDE SEQUENCE [LARGE SCALE MRNA]</scope>
    <source>
        <tissue evidence="10">Neurula</tissue>
    </source>
</reference>
<reference evidence="9" key="3">
    <citation type="submission" date="2005-02" db="EMBL/GenBank/DDBJ databases">
        <authorList>
            <consortium name="NIH - Xenopus Gene Collection (XGC) project"/>
        </authorList>
    </citation>
    <scope>NUCLEOTIDE SEQUENCE [LARGE SCALE MRNA]</scope>
    <source>
        <tissue evidence="8">Gastrula</tissue>
    </source>
</reference>
<feature type="signal peptide" evidence="5">
    <location>
        <begin position="1"/>
        <end position="19"/>
    </location>
</feature>
<feature type="chain" id="PRO_0000282950" description="Frizzled-7" evidence="5">
    <location>
        <begin position="20"/>
        <end position="548"/>
    </location>
</feature>
<feature type="topological domain" description="Extracellular" evidence="5">
    <location>
        <begin position="20"/>
        <end position="230"/>
    </location>
</feature>
<feature type="transmembrane region" description="Helical" evidence="5">
    <location>
        <begin position="231"/>
        <end position="251"/>
    </location>
</feature>
<feature type="topological domain" description="Cytoplasmic" evidence="5">
    <location>
        <begin position="252"/>
        <end position="262"/>
    </location>
</feature>
<feature type="transmembrane region" description="Helical" evidence="5">
    <location>
        <begin position="263"/>
        <end position="283"/>
    </location>
</feature>
<feature type="topological domain" description="Extracellular" evidence="5">
    <location>
        <begin position="284"/>
        <end position="310"/>
    </location>
</feature>
<feature type="transmembrane region" description="Helical" evidence="5">
    <location>
        <begin position="311"/>
        <end position="331"/>
    </location>
</feature>
<feature type="topological domain" description="Cytoplasmic" evidence="5">
    <location>
        <begin position="332"/>
        <end position="353"/>
    </location>
</feature>
<feature type="transmembrane region" description="Helical" evidence="5">
    <location>
        <begin position="354"/>
        <end position="374"/>
    </location>
</feature>
<feature type="topological domain" description="Extracellular" evidence="5">
    <location>
        <begin position="375"/>
        <end position="397"/>
    </location>
</feature>
<feature type="transmembrane region" description="Helical" evidence="5">
    <location>
        <begin position="398"/>
        <end position="418"/>
    </location>
</feature>
<feature type="topological domain" description="Cytoplasmic" evidence="5">
    <location>
        <begin position="419"/>
        <end position="444"/>
    </location>
</feature>
<feature type="transmembrane region" description="Helical" evidence="5">
    <location>
        <begin position="445"/>
        <end position="465"/>
    </location>
</feature>
<feature type="topological domain" description="Extracellular" evidence="5">
    <location>
        <begin position="466"/>
        <end position="502"/>
    </location>
</feature>
<feature type="transmembrane region" description="Helical" evidence="5">
    <location>
        <begin position="503"/>
        <end position="523"/>
    </location>
</feature>
<feature type="topological domain" description="Cytoplasmic" evidence="5">
    <location>
        <begin position="524"/>
        <end position="548"/>
    </location>
</feature>
<feature type="domain" description="FZ" evidence="6">
    <location>
        <begin position="31"/>
        <end position="150"/>
    </location>
</feature>
<feature type="short sequence motif" description="Lys-Thr-X-X-X-Trp motif, mediates interaction with the PDZ domain of Dvl family members" evidence="1">
    <location>
        <begin position="526"/>
        <end position="531"/>
    </location>
</feature>
<feature type="short sequence motif" description="PDZ-binding" evidence="5">
    <location>
        <begin position="546"/>
        <end position="548"/>
    </location>
</feature>
<feature type="glycosylation site" description="N-linked (GlcNAc...) asparagine" evidence="5">
    <location>
        <position position="50"/>
    </location>
</feature>
<feature type="glycosylation site" description="N-linked (GlcNAc...) asparagine" evidence="5">
    <location>
        <position position="151"/>
    </location>
</feature>
<feature type="disulfide bond" evidence="6">
    <location>
        <begin position="36"/>
        <end position="97"/>
    </location>
</feature>
<feature type="disulfide bond" evidence="6">
    <location>
        <begin position="44"/>
        <end position="90"/>
    </location>
</feature>
<feature type="disulfide bond" evidence="6">
    <location>
        <begin position="81"/>
        <end position="118"/>
    </location>
</feature>
<feature type="disulfide bond" evidence="6">
    <location>
        <begin position="107"/>
        <end position="147"/>
    </location>
</feature>
<feature type="disulfide bond" evidence="6">
    <location>
        <begin position="111"/>
        <end position="135"/>
    </location>
</feature>
<feature type="sequence conflict" description="In Ref. 2; CAJ82817." evidence="7" ref="2">
    <original>V</original>
    <variation>I</variation>
    <location>
        <position position="140"/>
    </location>
</feature>
<feature type="sequence conflict" description="In Ref. 2; CAJ82817." evidence="7" ref="2">
    <original>P</original>
    <variation>L</variation>
    <location>
        <position position="178"/>
    </location>
</feature>
<evidence type="ECO:0000250" key="1"/>
<evidence type="ECO:0000250" key="2">
    <source>
        <dbReference type="UniProtKB" id="O75084"/>
    </source>
</evidence>
<evidence type="ECO:0000250" key="3">
    <source>
        <dbReference type="UniProtKB" id="Q9PUK8"/>
    </source>
</evidence>
<evidence type="ECO:0000250" key="4">
    <source>
        <dbReference type="UniProtKB" id="Q9VVX3"/>
    </source>
</evidence>
<evidence type="ECO:0000255" key="5"/>
<evidence type="ECO:0000255" key="6">
    <source>
        <dbReference type="PROSITE-ProRule" id="PRU00090"/>
    </source>
</evidence>
<evidence type="ECO:0000305" key="7"/>
<evidence type="ECO:0000312" key="8">
    <source>
        <dbReference type="EMBL" id="AAH90579.1"/>
    </source>
</evidence>
<evidence type="ECO:0000312" key="9">
    <source>
        <dbReference type="EMBL" id="AAZ06130.1"/>
    </source>
</evidence>
<evidence type="ECO:0000312" key="10">
    <source>
        <dbReference type="EMBL" id="CAJ82817.1"/>
    </source>
</evidence>
<dbReference type="EMBL" id="AC149036">
    <property type="protein sequence ID" value="AAZ06130.1"/>
    <property type="molecule type" value="Genomic_DNA"/>
</dbReference>
<dbReference type="EMBL" id="CR759995">
    <property type="protein sequence ID" value="CAJ82817.1"/>
    <property type="molecule type" value="mRNA"/>
</dbReference>
<dbReference type="EMBL" id="BC090579">
    <property type="protein sequence ID" value="AAH90579.1"/>
    <property type="molecule type" value="mRNA"/>
</dbReference>
<dbReference type="RefSeq" id="NP_001016741.1">
    <property type="nucleotide sequence ID" value="NM_001016741.2"/>
</dbReference>
<dbReference type="SMR" id="Q5BL72"/>
<dbReference type="FunCoup" id="Q5BL72">
    <property type="interactions" value="1721"/>
</dbReference>
<dbReference type="STRING" id="8364.ENSXETP00000052004"/>
<dbReference type="GlyCosmos" id="Q5BL72">
    <property type="glycosylation" value="2 sites, No reported glycans"/>
</dbReference>
<dbReference type="PaxDb" id="8364-ENSXETP00000027115"/>
<dbReference type="DNASU" id="549495"/>
<dbReference type="GeneID" id="549495"/>
<dbReference type="KEGG" id="xtr:549495"/>
<dbReference type="AGR" id="Xenbase:XB-GENE-483731"/>
<dbReference type="CTD" id="8324"/>
<dbReference type="Xenbase" id="XB-GENE-483731">
    <property type="gene designation" value="fzd7"/>
</dbReference>
<dbReference type="eggNOG" id="KOG3577">
    <property type="taxonomic scope" value="Eukaryota"/>
</dbReference>
<dbReference type="HOGENOM" id="CLU_007873_2_1_1"/>
<dbReference type="InParanoid" id="Q5BL72"/>
<dbReference type="OrthoDB" id="10053709at2759"/>
<dbReference type="Reactome" id="R-XTR-4086400">
    <property type="pathway name" value="PCP/CE pathway"/>
</dbReference>
<dbReference type="Reactome" id="R-XTR-4608870">
    <property type="pathway name" value="Asymmetric localization of PCP proteins"/>
</dbReference>
<dbReference type="Proteomes" id="UP000008143">
    <property type="component" value="Chromosome 9"/>
</dbReference>
<dbReference type="Bgee" id="ENSXETG00000012404">
    <property type="expression patterns" value="Expressed in gastrula and 18 other cell types or tissues"/>
</dbReference>
<dbReference type="ExpressionAtlas" id="Q5BL72">
    <property type="expression patterns" value="baseline"/>
</dbReference>
<dbReference type="GO" id="GO:0010008">
    <property type="term" value="C:endosome membrane"/>
    <property type="evidence" value="ECO:0007669"/>
    <property type="project" value="UniProtKB-SubCell"/>
</dbReference>
<dbReference type="GO" id="GO:0005886">
    <property type="term" value="C:plasma membrane"/>
    <property type="evidence" value="ECO:0000250"/>
    <property type="project" value="UniProtKB"/>
</dbReference>
<dbReference type="GO" id="GO:0004930">
    <property type="term" value="F:G protein-coupled receptor activity"/>
    <property type="evidence" value="ECO:0007669"/>
    <property type="project" value="UniProtKB-KW"/>
</dbReference>
<dbReference type="GO" id="GO:0045545">
    <property type="term" value="F:syndecan binding"/>
    <property type="evidence" value="ECO:0000250"/>
    <property type="project" value="UniProtKB"/>
</dbReference>
<dbReference type="GO" id="GO:0017147">
    <property type="term" value="F:Wnt-protein binding"/>
    <property type="evidence" value="ECO:0000250"/>
    <property type="project" value="UniProtKB"/>
</dbReference>
<dbReference type="GO" id="GO:0060027">
    <property type="term" value="P:convergent extension involved in gastrulation"/>
    <property type="evidence" value="ECO:0000250"/>
    <property type="project" value="UniProtKB"/>
</dbReference>
<dbReference type="GO" id="GO:0009950">
    <property type="term" value="P:dorsal/ventral axis specification"/>
    <property type="evidence" value="ECO:0000250"/>
    <property type="project" value="UniProtKB"/>
</dbReference>
<dbReference type="GO" id="GO:0001702">
    <property type="term" value="P:gastrulation with mouth forming second"/>
    <property type="evidence" value="ECO:0000315"/>
    <property type="project" value="Xenbase"/>
</dbReference>
<dbReference type="GO" id="GO:0001707">
    <property type="term" value="P:mesoderm formation"/>
    <property type="evidence" value="ECO:0000250"/>
    <property type="project" value="UniProtKB"/>
</dbReference>
<dbReference type="GO" id="GO:0008104">
    <property type="term" value="P:protein localization"/>
    <property type="evidence" value="ECO:0000250"/>
    <property type="project" value="UniProtKB"/>
</dbReference>
<dbReference type="GO" id="GO:0048729">
    <property type="term" value="P:tissue morphogenesis"/>
    <property type="evidence" value="ECO:0000250"/>
    <property type="project" value="UniProtKB"/>
</dbReference>
<dbReference type="GO" id="GO:0016055">
    <property type="term" value="P:Wnt signaling pathway"/>
    <property type="evidence" value="ECO:0000250"/>
    <property type="project" value="UniProtKB"/>
</dbReference>
<dbReference type="CDD" id="cd15246">
    <property type="entry name" value="7tmF_FZD7"/>
    <property type="match status" value="1"/>
</dbReference>
<dbReference type="CDD" id="cd07466">
    <property type="entry name" value="CRD_FZ7"/>
    <property type="match status" value="1"/>
</dbReference>
<dbReference type="FunFam" id="1.10.2000.10:FF:000003">
    <property type="entry name" value="Frizzled class receptor 2"/>
    <property type="match status" value="1"/>
</dbReference>
<dbReference type="FunFam" id="1.20.1070.10:FF:000029">
    <property type="entry name" value="Frizzled class receptor 2"/>
    <property type="match status" value="1"/>
</dbReference>
<dbReference type="Gene3D" id="1.10.2000.10">
    <property type="entry name" value="Frizzled cysteine-rich domain"/>
    <property type="match status" value="1"/>
</dbReference>
<dbReference type="Gene3D" id="1.20.1070.10">
    <property type="entry name" value="Rhodopsin 7-helix transmembrane proteins"/>
    <property type="match status" value="1"/>
</dbReference>
<dbReference type="InterPro" id="IPR042742">
    <property type="entry name" value="Frizzled-7_CRD"/>
</dbReference>
<dbReference type="InterPro" id="IPR015526">
    <property type="entry name" value="Frizzled/SFRP"/>
</dbReference>
<dbReference type="InterPro" id="IPR000539">
    <property type="entry name" value="Frizzled/Smoothened_7TM"/>
</dbReference>
<dbReference type="InterPro" id="IPR020067">
    <property type="entry name" value="Frizzled_dom"/>
</dbReference>
<dbReference type="InterPro" id="IPR036790">
    <property type="entry name" value="Frizzled_dom_sf"/>
</dbReference>
<dbReference type="InterPro" id="IPR017981">
    <property type="entry name" value="GPCR_2-like_7TM"/>
</dbReference>
<dbReference type="PANTHER" id="PTHR11309">
    <property type="entry name" value="FRIZZLED"/>
    <property type="match status" value="1"/>
</dbReference>
<dbReference type="PANTHER" id="PTHR11309:SF31">
    <property type="entry name" value="FRIZZLED-7"/>
    <property type="match status" value="1"/>
</dbReference>
<dbReference type="Pfam" id="PF01534">
    <property type="entry name" value="Frizzled"/>
    <property type="match status" value="1"/>
</dbReference>
<dbReference type="Pfam" id="PF01392">
    <property type="entry name" value="Fz"/>
    <property type="match status" value="1"/>
</dbReference>
<dbReference type="PRINTS" id="PR00489">
    <property type="entry name" value="FRIZZLED"/>
</dbReference>
<dbReference type="SMART" id="SM00063">
    <property type="entry name" value="FRI"/>
    <property type="match status" value="1"/>
</dbReference>
<dbReference type="SMART" id="SM01330">
    <property type="entry name" value="Frizzled"/>
    <property type="match status" value="1"/>
</dbReference>
<dbReference type="SUPFAM" id="SSF63501">
    <property type="entry name" value="Frizzled cysteine-rich domain"/>
    <property type="match status" value="1"/>
</dbReference>
<dbReference type="PROSITE" id="PS50038">
    <property type="entry name" value="FZ"/>
    <property type="match status" value="1"/>
</dbReference>
<dbReference type="PROSITE" id="PS50261">
    <property type="entry name" value="G_PROTEIN_RECEP_F2_4"/>
    <property type="match status" value="1"/>
</dbReference>
<comment type="function">
    <text evidence="3">Receptor for Wnt proteins. Acts in both canonical and non-canonical Wnt pathways. Although different papers report differing Wnt preferences, wnt5a, wnt8b and wnt11 have been proposed as synergists. In the canonical Wnt pathway, acts via beta-catenin to promote the expression of the dorsal genes siamois, twin and nodal3 and to establish the dorsal axis of the embryo and induce dorsal mesoderm formation. In a non-canonical Wnt/planar cell polarity (PCP) pathway, acts with sdc4 and dvl2/dsh to regulate convergent extension movements in gastrulation. Triggers phosphorylation of dvl2/dsh and its translocation to the plasma membrane. In a third branch of Wnt signaling, acts in a non-canonical pathway via trimeric G proteins, and independently of dvl2/dsh, to recruit protein kinase C (PKC) to the membrane and thus activate PKC. PKC signaling controls cell sorting and tissue separation during gastrulation (By similarity).</text>
</comment>
<comment type="subunit">
    <text evidence="3">Interacts with wnt11 and sdc4. The extracellular domain interacts with the extracellular domain of pcdh8/papc (By similarity).</text>
</comment>
<comment type="subcellular location">
    <subcellularLocation>
        <location evidence="1">Cell membrane</location>
        <topology evidence="1">Multi-pass membrane protein</topology>
    </subcellularLocation>
    <subcellularLocation>
        <location evidence="2">Endosome membrane</location>
        <topology evidence="2">Multi-pass membrane protein</topology>
    </subcellularLocation>
    <text evidence="2">Associated to the plasma membrane in the presence of FZD7 and phosphatidylinositol 4,5-bisphosphate (PIP2). Localized in recycling endosomes in other conditions.</text>
</comment>
<comment type="domain">
    <text evidence="1">Lys-Thr-X-X-X-Trp motif interacts with the PDZ domain of Dvl (Disheveled) family members and is involved in the activation of the Wnt/beta-catenin signaling pathway.</text>
</comment>
<comment type="domain">
    <text evidence="4">The FZ domain is involved in binding with Wnt ligands.</text>
</comment>
<comment type="domain">
    <text evidence="3">The extracellular domain interacts with Wnt proteins and the intracellular C-terminus transmits the Wnt signal.</text>
</comment>
<comment type="similarity">
    <text evidence="5">Belongs to the G-protein coupled receptor Fz/Smo family.</text>
</comment>
<accession>Q5BL72</accession>
<accession>Q28J97</accession>
<gene>
    <name evidence="10" type="primary">fzd7</name>
    <name type="ORF">TNeu065e03.1</name>
</gene>
<name>FZD7_XENTR</name>
<proteinExistence type="evidence at transcript level"/>
<sequence length="548" mass="61872">MFATVSLLFCLLLQPSPSAQQYHGEKGISVPDHGFCQPISIPLCTDIAYNQTIMPNLLGHTNQEDAGLEVHQFYPLVKVQCSPELRFFLCSMYAPVCTVLEQAIPPCRSLCERARQGCEALMNKFGFQWPERLRCENFPVHGAGEICVGQNTSDNSPSGPTARPTPYLPDSITFHPHPNRDFTCPRQLKVPPYLGYRFLGEKDCGAPCEPGKANGLMYFKEEEVRFARLWVGIWAILCGISTLFTVLTYLVDMRRFSYPERPIIFLSGCYFMVAVAYTAGFLLEERGVCVERFSEDSYRTVAQGTKKEGCTILFMILYFFGMASSIWWVILSLTWFLAAGMKWGHEAIEANSQYFHLAAWAVPAVKTITILAMGQVDGDILSGVCYVGINSVDSLRGFVLAPLFVYLFIGTSFLLAGFVSLFRIRTIMKHDGTKTEKLEKLMVRIGVFSVMYTVPATIVLACYFYEQAFRDTWEKTWLVQTCKGFAVPCPNYNFAPMSPDFTVFMIKYLMTMIVGITSSFWIWSGKTLQSWRRFYHRLSNGGKGETAV</sequence>
<keyword id="KW-1003">Cell membrane</keyword>
<keyword id="KW-0217">Developmental protein</keyword>
<keyword id="KW-1015">Disulfide bond</keyword>
<keyword id="KW-0967">Endosome</keyword>
<keyword id="KW-0297">G-protein coupled receptor</keyword>
<keyword id="KW-0325">Glycoprotein</keyword>
<keyword id="KW-0472">Membrane</keyword>
<keyword id="KW-0675">Receptor</keyword>
<keyword id="KW-1185">Reference proteome</keyword>
<keyword id="KW-0732">Signal</keyword>
<keyword id="KW-0807">Transducer</keyword>
<keyword id="KW-0812">Transmembrane</keyword>
<keyword id="KW-1133">Transmembrane helix</keyword>
<keyword id="KW-0879">Wnt signaling pathway</keyword>
<protein>
    <recommendedName>
        <fullName>Frizzled-7</fullName>
        <shortName>Frz7</shortName>
        <shortName>Fz-7</shortName>
    </recommendedName>
</protein>